<reference evidence="5" key="1">
    <citation type="journal article" date="2007" name="Nature">
        <title>Evolution of genes and genomes on the Drosophila phylogeny.</title>
        <authorList>
            <consortium name="Drosophila 12 genomes consortium"/>
        </authorList>
    </citation>
    <scope>NUCLEOTIDE SEQUENCE [LARGE SCALE GENOMIC DNA]</scope>
    <source>
        <strain evidence="5">Tucson 15081-1352.22</strain>
    </source>
</reference>
<dbReference type="EMBL" id="CH933806">
    <property type="protein sequence ID" value="EDW15140.1"/>
    <property type="molecule type" value="Genomic_DNA"/>
</dbReference>
<dbReference type="SMR" id="B4K5S8"/>
<dbReference type="FunCoup" id="B4K5S8">
    <property type="interactions" value="2295"/>
</dbReference>
<dbReference type="EnsemblMetazoa" id="FBtr0173664">
    <property type="protein sequence ID" value="FBpp0172156"/>
    <property type="gene ID" value="FBgn0145666"/>
</dbReference>
<dbReference type="EnsemblMetazoa" id="XM_001999643.4">
    <property type="protein sequence ID" value="XP_001999679.1"/>
    <property type="gene ID" value="LOC6573613"/>
</dbReference>
<dbReference type="GeneID" id="6573613"/>
<dbReference type="KEGG" id="dmo:Dmoj_GI22939"/>
<dbReference type="CTD" id="41971"/>
<dbReference type="eggNOG" id="KOG3711">
    <property type="taxonomic scope" value="Eukaryota"/>
</dbReference>
<dbReference type="HOGENOM" id="CLU_012654_1_0_1"/>
<dbReference type="InParanoid" id="B4K5S8"/>
<dbReference type="OMA" id="NCTAMHR"/>
<dbReference type="OrthoDB" id="5844105at2759"/>
<dbReference type="PhylomeDB" id="B4K5S8"/>
<dbReference type="Proteomes" id="UP000009192">
    <property type="component" value="Unassembled WGS sequence"/>
</dbReference>
<dbReference type="GO" id="GO:0005737">
    <property type="term" value="C:cytoplasm"/>
    <property type="evidence" value="ECO:0000250"/>
    <property type="project" value="UniProtKB"/>
</dbReference>
<dbReference type="GO" id="GO:0160232">
    <property type="term" value="C:INTAC complex"/>
    <property type="evidence" value="ECO:0007669"/>
    <property type="project" value="EnsemblMetazoa"/>
</dbReference>
<dbReference type="GO" id="GO:0032039">
    <property type="term" value="C:integrator complex"/>
    <property type="evidence" value="ECO:0007669"/>
    <property type="project" value="EnsemblMetazoa"/>
</dbReference>
<dbReference type="GO" id="GO:0005634">
    <property type="term" value="C:nucleus"/>
    <property type="evidence" value="ECO:0000250"/>
    <property type="project" value="UniProtKB"/>
</dbReference>
<dbReference type="GO" id="GO:0048471">
    <property type="term" value="C:perinuclear region of cytoplasm"/>
    <property type="evidence" value="ECO:0007669"/>
    <property type="project" value="UniProtKB-SubCell"/>
</dbReference>
<dbReference type="GO" id="GO:0051301">
    <property type="term" value="P:cell division"/>
    <property type="evidence" value="ECO:0007669"/>
    <property type="project" value="UniProtKB-KW"/>
</dbReference>
<dbReference type="GO" id="GO:0051642">
    <property type="term" value="P:centrosome localization"/>
    <property type="evidence" value="ECO:0007669"/>
    <property type="project" value="EnsemblMetazoa"/>
</dbReference>
<dbReference type="GO" id="GO:0046843">
    <property type="term" value="P:dorsal appendage formation"/>
    <property type="evidence" value="ECO:0007669"/>
    <property type="project" value="EnsemblMetazoa"/>
</dbReference>
<dbReference type="GO" id="GO:0030317">
    <property type="term" value="P:flagellated sperm motility"/>
    <property type="evidence" value="ECO:0000250"/>
    <property type="project" value="UniProtKB"/>
</dbReference>
<dbReference type="GO" id="GO:0051321">
    <property type="term" value="P:meiotic cell cycle"/>
    <property type="evidence" value="ECO:0007669"/>
    <property type="project" value="UniProtKB-KW"/>
</dbReference>
<dbReference type="GO" id="GO:0051663">
    <property type="term" value="P:oocyte nucleus localization involved in oocyte dorsal/ventral axis specification"/>
    <property type="evidence" value="ECO:0007669"/>
    <property type="project" value="EnsemblMetazoa"/>
</dbReference>
<dbReference type="GO" id="GO:0060814">
    <property type="term" value="P:posterior mRNA localization involved in anterior/posterior axis specification"/>
    <property type="evidence" value="ECO:0007669"/>
    <property type="project" value="EnsemblMetazoa"/>
</dbReference>
<dbReference type="GO" id="GO:0080154">
    <property type="term" value="P:regulation of fertilization"/>
    <property type="evidence" value="ECO:0000250"/>
    <property type="project" value="UniProtKB"/>
</dbReference>
<dbReference type="GO" id="GO:0007346">
    <property type="term" value="P:regulation of mitotic cell cycle"/>
    <property type="evidence" value="ECO:0000250"/>
    <property type="project" value="UniProtKB"/>
</dbReference>
<dbReference type="GO" id="GO:0160240">
    <property type="term" value="P:RNA polymerase II transcription initiation surveillance"/>
    <property type="evidence" value="ECO:0007669"/>
    <property type="project" value="EnsemblMetazoa"/>
</dbReference>
<dbReference type="GO" id="GO:0034472">
    <property type="term" value="P:snRNA 3'-end processing"/>
    <property type="evidence" value="ECO:0007669"/>
    <property type="project" value="EnsemblMetazoa"/>
</dbReference>
<dbReference type="GO" id="GO:0007283">
    <property type="term" value="P:spermatogenesis"/>
    <property type="evidence" value="ECO:0007669"/>
    <property type="project" value="UniProtKB-KW"/>
</dbReference>
<dbReference type="InterPro" id="IPR019355">
    <property type="entry name" value="Cell_cycle_regulator_Mat89Bb"/>
</dbReference>
<dbReference type="PANTHER" id="PTHR12955:SF1">
    <property type="entry name" value="INTEGRATOR COMPLEX SUBUNIT 13"/>
    <property type="match status" value="1"/>
</dbReference>
<dbReference type="PANTHER" id="PTHR12955">
    <property type="entry name" value="SARCOMA ANTIGEN NY-SAR-95-RELATED"/>
    <property type="match status" value="1"/>
</dbReference>
<dbReference type="Pfam" id="PF10221">
    <property type="entry name" value="Mat89Bb"/>
    <property type="match status" value="1"/>
</dbReference>
<sequence length="679" mass="75410">MFERNQKTIFVLDHTRYFSISSEQYISMDYLKGKPVAESPGSGSSIVGTQLSKSLWTCAVESSIEYCRIVWDLFPGKKHVRFIVSDTAAHIVNTWSPSTQNMSHVSNAMMMVSVPSRSIPQSSDYSVIHGLRAAIEALAEPTDEQLQAAHAGCKRIGNKGRVICITSARDNTSMKSLEDIFNTVLIQQNALVAPPSKKGLQIDHCHLVILNIVPLGVESLVTNRSLLEISPFLNAEIHTVNAPEISDKLLHLIMGHYDLASTTVTNIPMKEEQNANSSANYDVEILHERAAHTKVCGPDFTFTTSIKPGTAYETVTLKWCTPRGCGSADLQPCVGQYNVTPVDVTSRPSSCLINFLLNGRSVLLEVPRKSGTKTTSHMLSARGGEIFVHSLSIARSAMDEAPSITDGPGGRVPDYRIPEMGQLLKMSRLVPLKTRPKGKCSQGEHLWRRMPRYFPRTANATILFNLQRQLSWLPHFLHLLVKEDMDKQDEVRCQQQIHELYKSASRGDLLPFSNSNNARLKVNKTKDQYRLFYRELEQLIQLNAHTPHHKNLLESLQSLRAAYGDASNKSDPSAAHLRSYTESPLSPERLEPTNSVNSSSSSILKASKRRMSGCGQRSLLDIISSAERSQSSKRLDFSGRLCTPLGQTAKLYPEFGNKDKEILTPGVIPSSLKDESIRS</sequence>
<gene>
    <name type="primary">asun</name>
    <name type="synonym">Mat89Bb</name>
    <name type="ORF">GI22939</name>
</gene>
<feature type="chain" id="PRO_0000385343" description="Protein asunder">
    <location>
        <begin position="1"/>
        <end position="679"/>
    </location>
</feature>
<feature type="region of interest" description="Disordered" evidence="3">
    <location>
        <begin position="564"/>
        <end position="610"/>
    </location>
</feature>
<feature type="coiled-coil region" evidence="2">
    <location>
        <begin position="519"/>
        <end position="541"/>
    </location>
</feature>
<feature type="short sequence motif" description="Nuclear localization signal (NLS)" evidence="1">
    <location>
        <begin position="604"/>
        <end position="610"/>
    </location>
</feature>
<organism>
    <name type="scientific">Drosophila mojavensis</name>
    <name type="common">Fruit fly</name>
    <dbReference type="NCBI Taxonomy" id="7230"/>
    <lineage>
        <taxon>Eukaryota</taxon>
        <taxon>Metazoa</taxon>
        <taxon>Ecdysozoa</taxon>
        <taxon>Arthropoda</taxon>
        <taxon>Hexapoda</taxon>
        <taxon>Insecta</taxon>
        <taxon>Pterygota</taxon>
        <taxon>Neoptera</taxon>
        <taxon>Endopterygota</taxon>
        <taxon>Diptera</taxon>
        <taxon>Brachycera</taxon>
        <taxon>Muscomorpha</taxon>
        <taxon>Ephydroidea</taxon>
        <taxon>Drosophilidae</taxon>
        <taxon>Drosophila</taxon>
    </lineage>
</organism>
<name>INT13_DROMO</name>
<proteinExistence type="inferred from homology"/>
<keyword id="KW-0131">Cell cycle</keyword>
<keyword id="KW-0132">Cell division</keyword>
<keyword id="KW-0175">Coiled coil</keyword>
<keyword id="KW-0963">Cytoplasm</keyword>
<keyword id="KW-0217">Developmental protein</keyword>
<keyword id="KW-0221">Differentiation</keyword>
<keyword id="KW-0469">Meiosis</keyword>
<keyword id="KW-0498">Mitosis</keyword>
<keyword id="KW-0539">Nucleus</keyword>
<keyword id="KW-0597">Phosphoprotein</keyword>
<keyword id="KW-1185">Reference proteome</keyword>
<keyword id="KW-0744">Spermatogenesis</keyword>
<evidence type="ECO:0000250" key="1">
    <source>
        <dbReference type="UniProtKB" id="Q9VEX5"/>
    </source>
</evidence>
<evidence type="ECO:0000255" key="2"/>
<evidence type="ECO:0000256" key="3">
    <source>
        <dbReference type="SAM" id="MobiDB-lite"/>
    </source>
</evidence>
<evidence type="ECO:0000305" key="4"/>
<evidence type="ECO:0000312" key="5">
    <source>
        <dbReference type="EMBL" id="EDW15140.1"/>
    </source>
</evidence>
<comment type="function">
    <text evidence="1">Component of the integrator complex, a multiprotein complex that terminates RNA polymerase II (Pol II) transcription in the promoter-proximal region of genes. The integrator complex provides a quality checkpoint during transcription elongation by driving premature transcription termination of transcripts that are unfavorably configured for transcriptional elongation: the complex terminates transcription by (1) catalyzing dephosphorylation of the C-terminal domain (CTD) of Pol II subunit Polr2A/Rbp1 and Spt5, and (2) degrading the exiting nascent RNA transcript via endonuclease activity. The integrator complex is also involved in the 3'-end processing of the U7 snRNA, and also the spliceosomal snRNAs U1, U2, U4 and U5.</text>
</comment>
<comment type="subunit">
    <text evidence="1">Belongs to the multiprotein complex Integrator, at least composed of IntS1, IntS2, IntS3, IntS4, omd/IntS5, IntS6, defl/IntS7, IntS8, IntS9, IntS10, IntS11, IntS12, asun/IntS13, IntS14 and IntS15. The core complex associates with protein phosphatase 2A subunits mts/PP2A and Pp2A-29B, to form the Integrator-PP2A (INTAC) complex.</text>
</comment>
<comment type="subcellular location">
    <subcellularLocation>
        <location evidence="1">Nucleus</location>
    </subcellularLocation>
    <subcellularLocation>
        <location evidence="1">Cytoplasm</location>
    </subcellularLocation>
    <subcellularLocation>
        <location evidence="1">Cytoplasm</location>
        <location evidence="1">Perinuclear region</location>
    </subcellularLocation>
    <text evidence="1">Colocalizes with dynein-dynactin on the nuclear surface at the meiotic G2/prophase transition in primary spermatocytes. Nuclear location is required for recruitment of dynein motors to nuclear envelope at G2/M.</text>
</comment>
<comment type="PTM">
    <text evidence="1">Phosphorylated.</text>
</comment>
<comment type="similarity">
    <text evidence="4">Belongs to the Integrator subunit 13 family.</text>
</comment>
<protein>
    <recommendedName>
        <fullName>Protein asunder</fullName>
    </recommendedName>
    <alternativeName>
        <fullName evidence="1">Cell cycle regulator Mat89Bb</fullName>
    </alternativeName>
    <alternativeName>
        <fullName evidence="1">Maternal transcript 89Bb</fullName>
    </alternativeName>
    <alternativeName>
        <fullName>Set apart in position or space protein</fullName>
    </alternativeName>
</protein>
<accession>B4K5S8</accession>